<keyword id="KW-1003">Cell membrane</keyword>
<keyword id="KW-0472">Membrane</keyword>
<keyword id="KW-0812">Transmembrane</keyword>
<keyword id="KW-1133">Transmembrane helix</keyword>
<evidence type="ECO:0000255" key="1">
    <source>
        <dbReference type="HAMAP-Rule" id="MF_01515"/>
    </source>
</evidence>
<organism>
    <name type="scientific">Listeria innocua serovar 6a (strain ATCC BAA-680 / CLIP 11262)</name>
    <dbReference type="NCBI Taxonomy" id="272626"/>
    <lineage>
        <taxon>Bacteria</taxon>
        <taxon>Bacillati</taxon>
        <taxon>Bacillota</taxon>
        <taxon>Bacilli</taxon>
        <taxon>Bacillales</taxon>
        <taxon>Listeriaceae</taxon>
        <taxon>Listeria</taxon>
    </lineage>
</organism>
<name>Y1888_LISIN</name>
<dbReference type="EMBL" id="AL596170">
    <property type="protein sequence ID" value="CAC97118.1"/>
    <property type="molecule type" value="Genomic_DNA"/>
</dbReference>
<dbReference type="PIR" id="AF1668">
    <property type="entry name" value="AF1668"/>
</dbReference>
<dbReference type="RefSeq" id="WP_003762861.1">
    <property type="nucleotide sequence ID" value="NC_003212.1"/>
</dbReference>
<dbReference type="SMR" id="Q92AN2"/>
<dbReference type="STRING" id="272626.gene:17566243"/>
<dbReference type="KEGG" id="lin:lin1888"/>
<dbReference type="eggNOG" id="COG4843">
    <property type="taxonomic scope" value="Bacteria"/>
</dbReference>
<dbReference type="HOGENOM" id="CLU_106166_1_0_9"/>
<dbReference type="OrthoDB" id="48231at2"/>
<dbReference type="Proteomes" id="UP000002513">
    <property type="component" value="Chromosome"/>
</dbReference>
<dbReference type="GO" id="GO:0005886">
    <property type="term" value="C:plasma membrane"/>
    <property type="evidence" value="ECO:0007669"/>
    <property type="project" value="UniProtKB-SubCell"/>
</dbReference>
<dbReference type="CDD" id="cd16381">
    <property type="entry name" value="YitT_C_like_1"/>
    <property type="match status" value="1"/>
</dbReference>
<dbReference type="HAMAP" id="MF_01515">
    <property type="entry name" value="UPF0316"/>
    <property type="match status" value="1"/>
</dbReference>
<dbReference type="InterPro" id="IPR019264">
    <property type="entry name" value="DUF2179"/>
</dbReference>
<dbReference type="InterPro" id="IPR044035">
    <property type="entry name" value="DUF5698"/>
</dbReference>
<dbReference type="InterPro" id="IPR022930">
    <property type="entry name" value="UPF0316"/>
</dbReference>
<dbReference type="NCBIfam" id="NF003192">
    <property type="entry name" value="PRK04164.1-3"/>
    <property type="match status" value="1"/>
</dbReference>
<dbReference type="NCBIfam" id="NF003194">
    <property type="entry name" value="PRK04164.1-5"/>
    <property type="match status" value="1"/>
</dbReference>
<dbReference type="PANTHER" id="PTHR40060">
    <property type="entry name" value="UPF0316 PROTEIN YEBE"/>
    <property type="match status" value="1"/>
</dbReference>
<dbReference type="PANTHER" id="PTHR40060:SF1">
    <property type="entry name" value="UPF0316 PROTEIN YEBE"/>
    <property type="match status" value="1"/>
</dbReference>
<dbReference type="Pfam" id="PF10035">
    <property type="entry name" value="DUF2179"/>
    <property type="match status" value="1"/>
</dbReference>
<dbReference type="Pfam" id="PF18955">
    <property type="entry name" value="DUF5698"/>
    <property type="match status" value="1"/>
</dbReference>
<sequence>MDNGIFIVATIFVVNILYVTIYTVRLLLTMKGYRYLAALSSVFEMIIYVVALSLVLDNLNNIANVLAYAVGFGVGIIVGMKIEERIALGYITVNVITKEYNLDLPNQIRDLGYGVTSWLASGRDGERMMLEILTQRKNERKLYKQIIEIDNGAFIVSSEPKQIHGGFWIKQVRK</sequence>
<accession>Q92AN2</accession>
<gene>
    <name type="ordered locus">lin1888</name>
</gene>
<protein>
    <recommendedName>
        <fullName evidence="1">UPF0316 protein lin1888</fullName>
    </recommendedName>
</protein>
<reference key="1">
    <citation type="journal article" date="2001" name="Science">
        <title>Comparative genomics of Listeria species.</title>
        <authorList>
            <person name="Glaser P."/>
            <person name="Frangeul L."/>
            <person name="Buchrieser C."/>
            <person name="Rusniok C."/>
            <person name="Amend A."/>
            <person name="Baquero F."/>
            <person name="Berche P."/>
            <person name="Bloecker H."/>
            <person name="Brandt P."/>
            <person name="Chakraborty T."/>
            <person name="Charbit A."/>
            <person name="Chetouani F."/>
            <person name="Couve E."/>
            <person name="de Daruvar A."/>
            <person name="Dehoux P."/>
            <person name="Domann E."/>
            <person name="Dominguez-Bernal G."/>
            <person name="Duchaud E."/>
            <person name="Durant L."/>
            <person name="Dussurget O."/>
            <person name="Entian K.-D."/>
            <person name="Fsihi H."/>
            <person name="Garcia-del Portillo F."/>
            <person name="Garrido P."/>
            <person name="Gautier L."/>
            <person name="Goebel W."/>
            <person name="Gomez-Lopez N."/>
            <person name="Hain T."/>
            <person name="Hauf J."/>
            <person name="Jackson D."/>
            <person name="Jones L.-M."/>
            <person name="Kaerst U."/>
            <person name="Kreft J."/>
            <person name="Kuhn M."/>
            <person name="Kunst F."/>
            <person name="Kurapkat G."/>
            <person name="Madueno E."/>
            <person name="Maitournam A."/>
            <person name="Mata Vicente J."/>
            <person name="Ng E."/>
            <person name="Nedjari H."/>
            <person name="Nordsiek G."/>
            <person name="Novella S."/>
            <person name="de Pablos B."/>
            <person name="Perez-Diaz J.-C."/>
            <person name="Purcell R."/>
            <person name="Remmel B."/>
            <person name="Rose M."/>
            <person name="Schlueter T."/>
            <person name="Simoes N."/>
            <person name="Tierrez A."/>
            <person name="Vazquez-Boland J.-A."/>
            <person name="Voss H."/>
            <person name="Wehland J."/>
            <person name="Cossart P."/>
        </authorList>
    </citation>
    <scope>NUCLEOTIDE SEQUENCE [LARGE SCALE GENOMIC DNA]</scope>
    <source>
        <strain>ATCC BAA-680 / CLIP 11262</strain>
    </source>
</reference>
<comment type="subcellular location">
    <subcellularLocation>
        <location evidence="1">Cell membrane</location>
        <topology evidence="1">Multi-pass membrane protein</topology>
    </subcellularLocation>
</comment>
<comment type="similarity">
    <text evidence="1">Belongs to the UPF0316 family.</text>
</comment>
<feature type="chain" id="PRO_0000171946" description="UPF0316 protein lin1888">
    <location>
        <begin position="1"/>
        <end position="174"/>
    </location>
</feature>
<feature type="transmembrane region" description="Helical" evidence="1">
    <location>
        <begin position="4"/>
        <end position="24"/>
    </location>
</feature>
<feature type="transmembrane region" description="Helical" evidence="1">
    <location>
        <begin position="36"/>
        <end position="56"/>
    </location>
</feature>
<feature type="transmembrane region" description="Helical" evidence="1">
    <location>
        <begin position="62"/>
        <end position="82"/>
    </location>
</feature>
<proteinExistence type="inferred from homology"/>